<evidence type="ECO:0000255" key="1">
    <source>
        <dbReference type="HAMAP-Rule" id="MF_00244"/>
    </source>
</evidence>
<accession>Q64PY0</accession>
<sequence>MAKTKTGIFSGSFNPIHIGHLALANYLCEFEGLDEVWFMVTPHNPFKNQADLWPDELRLQLVQLAIEGYPRFRVSDFEFHLPRPSYTIHTLNRLKQEYPEREFQLIIGSDNWMVFDRWFESERIVSENKILVYPRPGFSVDKSQLPPNVHVADSPIFEISSTFIREALATGKDIRYFLHPAVYKRIIQQTDSIDSSHSCHT</sequence>
<dbReference type="EC" id="2.7.7.18" evidence="1"/>
<dbReference type="EMBL" id="AP006841">
    <property type="protein sequence ID" value="BAD50451.1"/>
    <property type="molecule type" value="Genomic_DNA"/>
</dbReference>
<dbReference type="RefSeq" id="WP_005797930.1">
    <property type="nucleotide sequence ID" value="NC_006347.1"/>
</dbReference>
<dbReference type="RefSeq" id="YP_100985.1">
    <property type="nucleotide sequence ID" value="NC_006347.1"/>
</dbReference>
<dbReference type="SMR" id="Q64PY0"/>
<dbReference type="STRING" id="295405.BF3708"/>
<dbReference type="GeneID" id="60369648"/>
<dbReference type="KEGG" id="bfr:BF3708"/>
<dbReference type="PATRIC" id="fig|295405.11.peg.3559"/>
<dbReference type="HOGENOM" id="CLU_069765_3_3_10"/>
<dbReference type="OrthoDB" id="5295945at2"/>
<dbReference type="UniPathway" id="UPA00253">
    <property type="reaction ID" value="UER00332"/>
</dbReference>
<dbReference type="Proteomes" id="UP000002197">
    <property type="component" value="Chromosome"/>
</dbReference>
<dbReference type="GO" id="GO:0005524">
    <property type="term" value="F:ATP binding"/>
    <property type="evidence" value="ECO:0007669"/>
    <property type="project" value="UniProtKB-KW"/>
</dbReference>
<dbReference type="GO" id="GO:0004515">
    <property type="term" value="F:nicotinate-nucleotide adenylyltransferase activity"/>
    <property type="evidence" value="ECO:0007669"/>
    <property type="project" value="UniProtKB-UniRule"/>
</dbReference>
<dbReference type="GO" id="GO:0009435">
    <property type="term" value="P:NAD biosynthetic process"/>
    <property type="evidence" value="ECO:0007669"/>
    <property type="project" value="UniProtKB-UniRule"/>
</dbReference>
<dbReference type="CDD" id="cd02165">
    <property type="entry name" value="NMNAT"/>
    <property type="match status" value="1"/>
</dbReference>
<dbReference type="FunFam" id="3.40.50.620:FF:000251">
    <property type="entry name" value="Probable nicotinate-nucleotide adenylyltransferase"/>
    <property type="match status" value="1"/>
</dbReference>
<dbReference type="Gene3D" id="3.40.50.620">
    <property type="entry name" value="HUPs"/>
    <property type="match status" value="1"/>
</dbReference>
<dbReference type="HAMAP" id="MF_00244">
    <property type="entry name" value="NaMN_adenylyltr"/>
    <property type="match status" value="1"/>
</dbReference>
<dbReference type="InterPro" id="IPR004821">
    <property type="entry name" value="Cyt_trans-like"/>
</dbReference>
<dbReference type="InterPro" id="IPR005248">
    <property type="entry name" value="NadD/NMNAT"/>
</dbReference>
<dbReference type="InterPro" id="IPR014729">
    <property type="entry name" value="Rossmann-like_a/b/a_fold"/>
</dbReference>
<dbReference type="NCBIfam" id="TIGR00482">
    <property type="entry name" value="nicotinate (nicotinamide) nucleotide adenylyltransferase"/>
    <property type="match status" value="1"/>
</dbReference>
<dbReference type="PANTHER" id="PTHR39321">
    <property type="entry name" value="NICOTINATE-NUCLEOTIDE ADENYLYLTRANSFERASE-RELATED"/>
    <property type="match status" value="1"/>
</dbReference>
<dbReference type="PANTHER" id="PTHR39321:SF3">
    <property type="entry name" value="PHOSPHOPANTETHEINE ADENYLYLTRANSFERASE"/>
    <property type="match status" value="1"/>
</dbReference>
<dbReference type="Pfam" id="PF01467">
    <property type="entry name" value="CTP_transf_like"/>
    <property type="match status" value="1"/>
</dbReference>
<dbReference type="SUPFAM" id="SSF52374">
    <property type="entry name" value="Nucleotidylyl transferase"/>
    <property type="match status" value="1"/>
</dbReference>
<protein>
    <recommendedName>
        <fullName evidence="1">Probable nicotinate-nucleotide adenylyltransferase</fullName>
        <ecNumber evidence="1">2.7.7.18</ecNumber>
    </recommendedName>
    <alternativeName>
        <fullName evidence="1">Deamido-NAD(+) diphosphorylase</fullName>
    </alternativeName>
    <alternativeName>
        <fullName evidence="1">Deamido-NAD(+) pyrophosphorylase</fullName>
    </alternativeName>
    <alternativeName>
        <fullName evidence="1">Nicotinate mononucleotide adenylyltransferase</fullName>
        <shortName evidence="1">NaMN adenylyltransferase</shortName>
    </alternativeName>
</protein>
<keyword id="KW-0067">ATP-binding</keyword>
<keyword id="KW-0520">NAD</keyword>
<keyword id="KW-0547">Nucleotide-binding</keyword>
<keyword id="KW-0548">Nucleotidyltransferase</keyword>
<keyword id="KW-0662">Pyridine nucleotide biosynthesis</keyword>
<keyword id="KW-0808">Transferase</keyword>
<organism>
    <name type="scientific">Bacteroides fragilis (strain YCH46)</name>
    <dbReference type="NCBI Taxonomy" id="295405"/>
    <lineage>
        <taxon>Bacteria</taxon>
        <taxon>Pseudomonadati</taxon>
        <taxon>Bacteroidota</taxon>
        <taxon>Bacteroidia</taxon>
        <taxon>Bacteroidales</taxon>
        <taxon>Bacteroidaceae</taxon>
        <taxon>Bacteroides</taxon>
    </lineage>
</organism>
<comment type="function">
    <text evidence="1">Catalyzes the reversible adenylation of nicotinate mononucleotide (NaMN) to nicotinic acid adenine dinucleotide (NaAD).</text>
</comment>
<comment type="catalytic activity">
    <reaction evidence="1">
        <text>nicotinate beta-D-ribonucleotide + ATP + H(+) = deamido-NAD(+) + diphosphate</text>
        <dbReference type="Rhea" id="RHEA:22860"/>
        <dbReference type="ChEBI" id="CHEBI:15378"/>
        <dbReference type="ChEBI" id="CHEBI:30616"/>
        <dbReference type="ChEBI" id="CHEBI:33019"/>
        <dbReference type="ChEBI" id="CHEBI:57502"/>
        <dbReference type="ChEBI" id="CHEBI:58437"/>
        <dbReference type="EC" id="2.7.7.18"/>
    </reaction>
</comment>
<comment type="pathway">
    <text evidence="1">Cofactor biosynthesis; NAD(+) biosynthesis; deamido-NAD(+) from nicotinate D-ribonucleotide: step 1/1.</text>
</comment>
<comment type="similarity">
    <text evidence="1">Belongs to the NadD family.</text>
</comment>
<gene>
    <name evidence="1" type="primary">nadD</name>
    <name type="ordered locus">BF3708</name>
</gene>
<feature type="chain" id="PRO_0000181382" description="Probable nicotinate-nucleotide adenylyltransferase">
    <location>
        <begin position="1"/>
        <end position="201"/>
    </location>
</feature>
<proteinExistence type="inferred from homology"/>
<reference key="1">
    <citation type="journal article" date="2004" name="Proc. Natl. Acad. Sci. U.S.A.">
        <title>Genomic analysis of Bacteroides fragilis reveals extensive DNA inversions regulating cell surface adaptation.</title>
        <authorList>
            <person name="Kuwahara T."/>
            <person name="Yamashita A."/>
            <person name="Hirakawa H."/>
            <person name="Nakayama H."/>
            <person name="Toh H."/>
            <person name="Okada N."/>
            <person name="Kuhara S."/>
            <person name="Hattori M."/>
            <person name="Hayashi T."/>
            <person name="Ohnishi Y."/>
        </authorList>
    </citation>
    <scope>NUCLEOTIDE SEQUENCE [LARGE SCALE GENOMIC DNA]</scope>
    <source>
        <strain>YCH46</strain>
    </source>
</reference>
<name>NADD_BACFR</name>